<proteinExistence type="inferred from homology"/>
<sequence>MLPRAARPPCLRVPGHFAHRGPAVPRSTPRISTRHSIQFRVFSTSKGLLNKNATSEPKTPISGSPLAPQSADQKTKNAQNAAGTPKRDLLSETMVGKQEQRKADWAIMKEMAKYLWPKDDWGTKLRVGTALSLLVGAKILNVNVPFYFKSIVDSMNVDFAAIGGTAYTVAGSMIIAYGVTRIGATLFQELRNAVFASVAQKAIRRVARNVFEHLLRLDLNFHLSRQTGGLTRAIDRGTKGISFLLTSMVFHVVPTALEISLVCGILTYQYGAQFAAITAATMVAYSAFTITTTAWRTKFRKQANAADNRGATVAVDSLINYEAVKYFNNEKFEVARYDKALKAYEDASIKVTTSLAFLNSGQNMIFSSALAGMMYLAANGVASGSLTVGDLVMVNQLVFQLSVPLNFLGSVYRELRQSLLDMETLFNLQKVNVNITEKPNAKPLQLHRGGEIKFENVTFGYHPDRPILKNASFTIPAGQKFAIVGPSGCGKSTILRLLFRYYDVQEGRILVDGQDVRDVTLESLRKAIGVVPQDTPLFNDSIAHNIRYGRIDATDEEVRKAAQRAHIHELIEKLPEGYKTAVGERGMMISGGEKQRLAISRLILKDPELLFFDEATSALDTYTEQALLQNINSVLKDKARTSVFVAHRLRTICDSDQILVLKEGRVAETGSHRELLELDGIYAELWNAQEMSFAQDPESEGNAELEEGAGQEVLPDSRQK</sequence>
<organism>
    <name type="scientific">Aspergillus oryzae (strain ATCC 42149 / RIB 40)</name>
    <name type="common">Yellow koji mold</name>
    <dbReference type="NCBI Taxonomy" id="510516"/>
    <lineage>
        <taxon>Eukaryota</taxon>
        <taxon>Fungi</taxon>
        <taxon>Dikarya</taxon>
        <taxon>Ascomycota</taxon>
        <taxon>Pezizomycotina</taxon>
        <taxon>Eurotiomycetes</taxon>
        <taxon>Eurotiomycetidae</taxon>
        <taxon>Eurotiales</taxon>
        <taxon>Aspergillaceae</taxon>
        <taxon>Aspergillus</taxon>
        <taxon>Aspergillus subgen. Circumdati</taxon>
    </lineage>
</organism>
<dbReference type="EC" id="7.-.-.-" evidence="2"/>
<dbReference type="EMBL" id="BA000050">
    <property type="protein sequence ID" value="BAE57591.1"/>
    <property type="molecule type" value="Genomic_DNA"/>
</dbReference>
<dbReference type="RefSeq" id="XP_001819593.1">
    <property type="nucleotide sequence ID" value="XM_001819541.2"/>
</dbReference>
<dbReference type="SMR" id="Q2ULH4"/>
<dbReference type="STRING" id="510516.Q2ULH4"/>
<dbReference type="EnsemblFungi" id="BAE57591">
    <property type="protein sequence ID" value="BAE57591"/>
    <property type="gene ID" value="AO090003000411"/>
</dbReference>
<dbReference type="GeneID" id="5991576"/>
<dbReference type="KEGG" id="aor:AO090003000411"/>
<dbReference type="VEuPathDB" id="FungiDB:AO090003000411"/>
<dbReference type="HOGENOM" id="CLU_000604_84_1_1"/>
<dbReference type="OMA" id="VFHIIPI"/>
<dbReference type="OrthoDB" id="67130at5052"/>
<dbReference type="Proteomes" id="UP000006564">
    <property type="component" value="Chromosome 2"/>
</dbReference>
<dbReference type="GO" id="GO:0005743">
    <property type="term" value="C:mitochondrial inner membrane"/>
    <property type="evidence" value="ECO:0007669"/>
    <property type="project" value="UniProtKB-SubCell"/>
</dbReference>
<dbReference type="GO" id="GO:0140359">
    <property type="term" value="F:ABC-type transporter activity"/>
    <property type="evidence" value="ECO:0007669"/>
    <property type="project" value="InterPro"/>
</dbReference>
<dbReference type="GO" id="GO:0005524">
    <property type="term" value="F:ATP binding"/>
    <property type="evidence" value="ECO:0007669"/>
    <property type="project" value="UniProtKB-KW"/>
</dbReference>
<dbReference type="GO" id="GO:0016887">
    <property type="term" value="F:ATP hydrolysis activity"/>
    <property type="evidence" value="ECO:0007669"/>
    <property type="project" value="InterPro"/>
</dbReference>
<dbReference type="GO" id="GO:0006879">
    <property type="term" value="P:intracellular iron ion homeostasis"/>
    <property type="evidence" value="ECO:0007669"/>
    <property type="project" value="TreeGrafter"/>
</dbReference>
<dbReference type="CDD" id="cd18582">
    <property type="entry name" value="ABC_6TM_ATM1_ABCB7"/>
    <property type="match status" value="1"/>
</dbReference>
<dbReference type="CDD" id="cd03253">
    <property type="entry name" value="ABCC_ATM1_transporter"/>
    <property type="match status" value="1"/>
</dbReference>
<dbReference type="FunFam" id="1.20.1560.10:FF:000004">
    <property type="entry name" value="ATP-binding cassette sub-family B member 7"/>
    <property type="match status" value="1"/>
</dbReference>
<dbReference type="FunFam" id="3.40.50.300:FF:000186">
    <property type="entry name" value="ATP-binding cassette sub-family B member 7, mitochondrial"/>
    <property type="match status" value="1"/>
</dbReference>
<dbReference type="Gene3D" id="1.20.1560.10">
    <property type="entry name" value="ABC transporter type 1, transmembrane domain"/>
    <property type="match status" value="1"/>
</dbReference>
<dbReference type="Gene3D" id="3.40.50.300">
    <property type="entry name" value="P-loop containing nucleotide triphosphate hydrolases"/>
    <property type="match status" value="1"/>
</dbReference>
<dbReference type="InterPro" id="IPR003593">
    <property type="entry name" value="AAA+_ATPase"/>
</dbReference>
<dbReference type="InterPro" id="IPR011527">
    <property type="entry name" value="ABC1_TM_dom"/>
</dbReference>
<dbReference type="InterPro" id="IPR036640">
    <property type="entry name" value="ABC1_TM_sf"/>
</dbReference>
<dbReference type="InterPro" id="IPR003439">
    <property type="entry name" value="ABC_transporter-like_ATP-bd"/>
</dbReference>
<dbReference type="InterPro" id="IPR017871">
    <property type="entry name" value="ABC_transporter-like_CS"/>
</dbReference>
<dbReference type="InterPro" id="IPR027417">
    <property type="entry name" value="P-loop_NTPase"/>
</dbReference>
<dbReference type="InterPro" id="IPR039421">
    <property type="entry name" value="Type_1_exporter"/>
</dbReference>
<dbReference type="PANTHER" id="PTHR24221">
    <property type="entry name" value="ATP-BINDING CASSETTE SUB-FAMILY B"/>
    <property type="match status" value="1"/>
</dbReference>
<dbReference type="PANTHER" id="PTHR24221:SF402">
    <property type="entry name" value="IRON-SULFUR CLUSTERS TRANSPORTER ABCB7, MITOCHONDRIAL"/>
    <property type="match status" value="1"/>
</dbReference>
<dbReference type="Pfam" id="PF00664">
    <property type="entry name" value="ABC_membrane"/>
    <property type="match status" value="1"/>
</dbReference>
<dbReference type="Pfam" id="PF00005">
    <property type="entry name" value="ABC_tran"/>
    <property type="match status" value="1"/>
</dbReference>
<dbReference type="SMART" id="SM00382">
    <property type="entry name" value="AAA"/>
    <property type="match status" value="1"/>
</dbReference>
<dbReference type="SUPFAM" id="SSF90123">
    <property type="entry name" value="ABC transporter transmembrane region"/>
    <property type="match status" value="1"/>
</dbReference>
<dbReference type="SUPFAM" id="SSF52540">
    <property type="entry name" value="P-loop containing nucleoside triphosphate hydrolases"/>
    <property type="match status" value="1"/>
</dbReference>
<dbReference type="PROSITE" id="PS50929">
    <property type="entry name" value="ABC_TM1F"/>
    <property type="match status" value="1"/>
</dbReference>
<dbReference type="PROSITE" id="PS00211">
    <property type="entry name" value="ABC_TRANSPORTER_1"/>
    <property type="match status" value="1"/>
</dbReference>
<dbReference type="PROSITE" id="PS50893">
    <property type="entry name" value="ABC_TRANSPORTER_2"/>
    <property type="match status" value="1"/>
</dbReference>
<comment type="function">
    <text evidence="1">Performs an essential function in the generation of cytoplasmic iron-sulfur proteins by mediating the ATP-dependent export of Fe/S cluster precursors synthesized by nfs1 and other mitochondrial proteins (By similarity). Hydrolyzes ATP (By similarity). Binds glutathione and may function by transporting a glutathione-conjugated iron-sulfur compound (By similarity).</text>
</comment>
<comment type="subunit">
    <text evidence="1">Homodimer.</text>
</comment>
<comment type="subcellular location">
    <subcellularLocation>
        <location evidence="1">Mitochondrion inner membrane</location>
        <topology evidence="6">Multi-pass membrane protein</topology>
    </subcellularLocation>
</comment>
<comment type="similarity">
    <text evidence="8">Belongs to the ABC transporter superfamily. ABCB family. Heavy Metal importer (TC 3.A.1.210) subfamily.</text>
</comment>
<gene>
    <name evidence="8" type="primary">atm1</name>
    <name type="ORF">AO090003000411</name>
</gene>
<accession>Q2ULH4</accession>
<feature type="transit peptide" description="Mitochondrion" evidence="4">
    <location>
        <begin position="1"/>
        <end position="49"/>
    </location>
</feature>
<feature type="chain" id="PRO_0000255439" description="Iron-sulfur clusters transporter atm1, mitochondrial">
    <location>
        <begin position="50"/>
        <end position="720"/>
    </location>
</feature>
<feature type="topological domain" description="Mitochondrial matrix" evidence="1">
    <location>
        <begin position="50"/>
        <end position="126"/>
    </location>
</feature>
<feature type="transmembrane region" description="Helical" evidence="6">
    <location>
        <begin position="127"/>
        <end position="148"/>
    </location>
</feature>
<feature type="topological domain" description="Mitochondrial intermembrane" evidence="1">
    <location>
        <begin position="149"/>
        <end position="171"/>
    </location>
</feature>
<feature type="transmembrane region" description="Helical" evidence="6">
    <location>
        <begin position="172"/>
        <end position="195"/>
    </location>
</feature>
<feature type="topological domain" description="Mitochondrial matrix" evidence="1">
    <location>
        <begin position="196"/>
        <end position="244"/>
    </location>
</feature>
<feature type="transmembrane region" description="Helical" evidence="6">
    <location>
        <begin position="245"/>
        <end position="268"/>
    </location>
</feature>
<feature type="topological domain" description="Mitochondrial intermembrane" evidence="1">
    <location>
        <position position="269"/>
    </location>
</feature>
<feature type="transmembrane region" description="Helical" evidence="6">
    <location>
        <begin position="270"/>
        <end position="290"/>
    </location>
</feature>
<feature type="topological domain" description="Mitochondrial matrix" evidence="1">
    <location>
        <begin position="291"/>
        <end position="356"/>
    </location>
</feature>
<feature type="transmembrane region" description="Helical" evidence="6">
    <location>
        <begin position="357"/>
        <end position="375"/>
    </location>
</feature>
<feature type="topological domain" description="Mitochondrial intermembrane" evidence="1">
    <location>
        <begin position="376"/>
        <end position="390"/>
    </location>
</feature>
<feature type="transmembrane region" description="Helical" evidence="6">
    <location>
        <begin position="391"/>
        <end position="412"/>
    </location>
</feature>
<feature type="topological domain" description="Mitochondrial matrix" evidence="1">
    <location>
        <begin position="413"/>
        <end position="720"/>
    </location>
</feature>
<feature type="domain" description="ABC transmembrane type-1" evidence="6">
    <location>
        <begin position="127"/>
        <end position="417"/>
    </location>
</feature>
<feature type="domain" description="ABC transporter" evidence="5">
    <location>
        <begin position="452"/>
        <end position="688"/>
    </location>
</feature>
<feature type="region of interest" description="Disordered" evidence="7">
    <location>
        <begin position="48"/>
        <end position="96"/>
    </location>
</feature>
<feature type="region of interest" description="Disordered" evidence="7">
    <location>
        <begin position="693"/>
        <end position="720"/>
    </location>
</feature>
<feature type="compositionally biased region" description="Polar residues" evidence="7">
    <location>
        <begin position="48"/>
        <end position="57"/>
    </location>
</feature>
<feature type="compositionally biased region" description="Polar residues" evidence="7">
    <location>
        <begin position="70"/>
        <end position="82"/>
    </location>
</feature>
<feature type="compositionally biased region" description="Acidic residues" evidence="7">
    <location>
        <begin position="697"/>
        <end position="709"/>
    </location>
</feature>
<feature type="binding site" evidence="1">
    <location>
        <begin position="296"/>
        <end position="300"/>
    </location>
    <ligand>
        <name>glutathione</name>
        <dbReference type="ChEBI" id="CHEBI:57925"/>
    </ligand>
</feature>
<feature type="binding site" evidence="1">
    <location>
        <begin position="359"/>
        <end position="362"/>
    </location>
    <ligand>
        <name>glutathione</name>
        <dbReference type="ChEBI" id="CHEBI:57925"/>
    </ligand>
</feature>
<feature type="binding site" evidence="2">
    <location>
        <position position="409"/>
    </location>
    <ligand>
        <name>glutathione</name>
        <dbReference type="ChEBI" id="CHEBI:57925"/>
    </ligand>
</feature>
<feature type="binding site" evidence="3">
    <location>
        <position position="461"/>
    </location>
    <ligand>
        <name>ATP</name>
        <dbReference type="ChEBI" id="CHEBI:30616"/>
    </ligand>
</feature>
<feature type="binding site" evidence="5">
    <location>
        <begin position="485"/>
        <end position="496"/>
    </location>
    <ligand>
        <name>ATP</name>
        <dbReference type="ChEBI" id="CHEBI:30616"/>
    </ligand>
</feature>
<keyword id="KW-0067">ATP-binding</keyword>
<keyword id="KW-0472">Membrane</keyword>
<keyword id="KW-0496">Mitochondrion</keyword>
<keyword id="KW-0999">Mitochondrion inner membrane</keyword>
<keyword id="KW-0547">Nucleotide-binding</keyword>
<keyword id="KW-1185">Reference proteome</keyword>
<keyword id="KW-0809">Transit peptide</keyword>
<keyword id="KW-1278">Translocase</keyword>
<keyword id="KW-0812">Transmembrane</keyword>
<keyword id="KW-1133">Transmembrane helix</keyword>
<keyword id="KW-0813">Transport</keyword>
<name>ATM1_ASPOR</name>
<reference key="1">
    <citation type="journal article" date="2005" name="Nature">
        <title>Genome sequencing and analysis of Aspergillus oryzae.</title>
        <authorList>
            <person name="Machida M."/>
            <person name="Asai K."/>
            <person name="Sano M."/>
            <person name="Tanaka T."/>
            <person name="Kumagai T."/>
            <person name="Terai G."/>
            <person name="Kusumoto K."/>
            <person name="Arima T."/>
            <person name="Akita O."/>
            <person name="Kashiwagi Y."/>
            <person name="Abe K."/>
            <person name="Gomi K."/>
            <person name="Horiuchi H."/>
            <person name="Kitamoto K."/>
            <person name="Kobayashi T."/>
            <person name="Takeuchi M."/>
            <person name="Denning D.W."/>
            <person name="Galagan J.E."/>
            <person name="Nierman W.C."/>
            <person name="Yu J."/>
            <person name="Archer D.B."/>
            <person name="Bennett J.W."/>
            <person name="Bhatnagar D."/>
            <person name="Cleveland T.E."/>
            <person name="Fedorova N.D."/>
            <person name="Gotoh O."/>
            <person name="Horikawa H."/>
            <person name="Hosoyama A."/>
            <person name="Ichinomiya M."/>
            <person name="Igarashi R."/>
            <person name="Iwashita K."/>
            <person name="Juvvadi P.R."/>
            <person name="Kato M."/>
            <person name="Kato Y."/>
            <person name="Kin T."/>
            <person name="Kokubun A."/>
            <person name="Maeda H."/>
            <person name="Maeyama N."/>
            <person name="Maruyama J."/>
            <person name="Nagasaki H."/>
            <person name="Nakajima T."/>
            <person name="Oda K."/>
            <person name="Okada K."/>
            <person name="Paulsen I."/>
            <person name="Sakamoto K."/>
            <person name="Sawano T."/>
            <person name="Takahashi M."/>
            <person name="Takase K."/>
            <person name="Terabayashi Y."/>
            <person name="Wortman J.R."/>
            <person name="Yamada O."/>
            <person name="Yamagata Y."/>
            <person name="Anazawa H."/>
            <person name="Hata Y."/>
            <person name="Koide Y."/>
            <person name="Komori T."/>
            <person name="Koyama Y."/>
            <person name="Minetoki T."/>
            <person name="Suharnan S."/>
            <person name="Tanaka A."/>
            <person name="Isono K."/>
            <person name="Kuhara S."/>
            <person name="Ogasawara N."/>
            <person name="Kikuchi H."/>
        </authorList>
    </citation>
    <scope>NUCLEOTIDE SEQUENCE [LARGE SCALE GENOMIC DNA]</scope>
    <source>
        <strain>ATCC 42149 / RIB 40</strain>
    </source>
</reference>
<protein>
    <recommendedName>
        <fullName evidence="8">Iron-sulfur clusters transporter atm1, mitochondrial</fullName>
        <ecNumber evidence="2">7.-.-.-</ecNumber>
    </recommendedName>
</protein>
<evidence type="ECO:0000250" key="1">
    <source>
        <dbReference type="UniProtKB" id="P40416"/>
    </source>
</evidence>
<evidence type="ECO:0000250" key="2">
    <source>
        <dbReference type="UniProtKB" id="Q2G506"/>
    </source>
</evidence>
<evidence type="ECO:0000250" key="3">
    <source>
        <dbReference type="UniProtKB" id="Q9NP58"/>
    </source>
</evidence>
<evidence type="ECO:0000255" key="4"/>
<evidence type="ECO:0000255" key="5">
    <source>
        <dbReference type="PROSITE-ProRule" id="PRU00434"/>
    </source>
</evidence>
<evidence type="ECO:0000255" key="6">
    <source>
        <dbReference type="PROSITE-ProRule" id="PRU00441"/>
    </source>
</evidence>
<evidence type="ECO:0000256" key="7">
    <source>
        <dbReference type="SAM" id="MobiDB-lite"/>
    </source>
</evidence>
<evidence type="ECO:0000305" key="8"/>